<gene>
    <name evidence="1" type="primary">tus</name>
    <name type="ordered locus">ECDH10B_1743</name>
</gene>
<proteinExistence type="inferred from homology"/>
<organism>
    <name type="scientific">Escherichia coli (strain K12 / DH10B)</name>
    <dbReference type="NCBI Taxonomy" id="316385"/>
    <lineage>
        <taxon>Bacteria</taxon>
        <taxon>Pseudomonadati</taxon>
        <taxon>Pseudomonadota</taxon>
        <taxon>Gammaproteobacteria</taxon>
        <taxon>Enterobacterales</taxon>
        <taxon>Enterobacteriaceae</taxon>
        <taxon>Escherichia</taxon>
    </lineage>
</organism>
<name>TUS_ECODH</name>
<comment type="function">
    <text evidence="1">Trans-acting protein required for termination of DNA replication. Binds to DNA replication terminator sequences (terA to terF) to prevent the passage of replication forks. The termination efficiency will be affected by the affinity of this protein for the terminator sequence.</text>
</comment>
<comment type="subcellular location">
    <subcellularLocation>
        <location evidence="1">Cytoplasm</location>
    </subcellularLocation>
</comment>
<comment type="similarity">
    <text evidence="1">Belongs to the Tus family.</text>
</comment>
<protein>
    <recommendedName>
        <fullName evidence="1">DNA replication terminus site-binding protein</fullName>
        <shortName evidence="1">Ter-binding protein</shortName>
    </recommendedName>
</protein>
<accession>B1XF75</accession>
<keyword id="KW-0963">Cytoplasm</keyword>
<keyword id="KW-0235">DNA replication</keyword>
<keyword id="KW-0238">DNA-binding</keyword>
<feature type="chain" id="PRO_1000126037" description="DNA replication terminus site-binding protein">
    <location>
        <begin position="1"/>
        <end position="309"/>
    </location>
</feature>
<reference key="1">
    <citation type="journal article" date="2008" name="J. Bacteriol.">
        <title>The complete genome sequence of Escherichia coli DH10B: insights into the biology of a laboratory workhorse.</title>
        <authorList>
            <person name="Durfee T."/>
            <person name="Nelson R."/>
            <person name="Baldwin S."/>
            <person name="Plunkett G. III"/>
            <person name="Burland V."/>
            <person name="Mau B."/>
            <person name="Petrosino J.F."/>
            <person name="Qin X."/>
            <person name="Muzny D.M."/>
            <person name="Ayele M."/>
            <person name="Gibbs R.A."/>
            <person name="Csorgo B."/>
            <person name="Posfai G."/>
            <person name="Weinstock G.M."/>
            <person name="Blattner F.R."/>
        </authorList>
    </citation>
    <scope>NUCLEOTIDE SEQUENCE [LARGE SCALE GENOMIC DNA]</scope>
    <source>
        <strain>K12 / DH10B</strain>
    </source>
</reference>
<dbReference type="EMBL" id="CP000948">
    <property type="protein sequence ID" value="ACB02816.1"/>
    <property type="molecule type" value="Genomic_DNA"/>
</dbReference>
<dbReference type="RefSeq" id="WP_000135181.1">
    <property type="nucleotide sequence ID" value="NC_010473.1"/>
</dbReference>
<dbReference type="SMR" id="B1XF75"/>
<dbReference type="KEGG" id="ecd:ECDH10B_1743"/>
<dbReference type="HOGENOM" id="CLU_078181_0_0_6"/>
<dbReference type="GO" id="GO:0005737">
    <property type="term" value="C:cytoplasm"/>
    <property type="evidence" value="ECO:0007669"/>
    <property type="project" value="UniProtKB-SubCell"/>
</dbReference>
<dbReference type="GO" id="GO:0003677">
    <property type="term" value="F:DNA binding"/>
    <property type="evidence" value="ECO:0007669"/>
    <property type="project" value="UniProtKB-UniRule"/>
</dbReference>
<dbReference type="GO" id="GO:0006274">
    <property type="term" value="P:DNA replication termination"/>
    <property type="evidence" value="ECO:0007669"/>
    <property type="project" value="UniProtKB-UniRule"/>
</dbReference>
<dbReference type="Gene3D" id="3.30.54.10">
    <property type="match status" value="1"/>
</dbReference>
<dbReference type="Gene3D" id="3.50.14.10">
    <property type="entry name" value="Replication terminator Tus, domain 1 superfamily/Replication terminator Tus"/>
    <property type="match status" value="1"/>
</dbReference>
<dbReference type="HAMAP" id="MF_00483">
    <property type="entry name" value="Rep_term_Tus"/>
    <property type="match status" value="1"/>
</dbReference>
<dbReference type="InterPro" id="IPR008865">
    <property type="entry name" value="DNA_replication_term_site-bd"/>
</dbReference>
<dbReference type="InterPro" id="IPR036381">
    <property type="entry name" value="Tus_dom1"/>
</dbReference>
<dbReference type="InterPro" id="IPR036384">
    <property type="entry name" value="Tus_sf"/>
</dbReference>
<dbReference type="NCBIfam" id="TIGR02648">
    <property type="entry name" value="rep_term_tus"/>
    <property type="match status" value="1"/>
</dbReference>
<dbReference type="Pfam" id="PF05472">
    <property type="entry name" value="Ter"/>
    <property type="match status" value="1"/>
</dbReference>
<dbReference type="SUPFAM" id="SSF56596">
    <property type="entry name" value="Replication terminator protein (Tus)"/>
    <property type="match status" value="1"/>
</dbReference>
<sequence length="309" mass="35783">MARYDLVDRLNTTFRQMEQELAIFAAHLEQHKLLVARVFSLPEVKKEDEHNPLNRIEVKQHLGNDAQSLALRHFRHLFIQQQSENRSSKAAVRLPGVLCYQVDNLSQAALVSHIQHINKLKTTFEHIVTVESELPTAARFEWVHRHLPGLITLNAYRTLTVLHDPATLRFGWANKHIIKNLHRDEVLAQLEKSLKSPRSVAPWTREEWQRKLEREYQDIAALPQNAKLKIKRPVKVQPIARVWYKGDQKQVQHACPTPLIALINRDNGAGVPDVGELLNYDADNVQHRYKPQAQPLRLIIPRLHLYVAD</sequence>
<evidence type="ECO:0000255" key="1">
    <source>
        <dbReference type="HAMAP-Rule" id="MF_00483"/>
    </source>
</evidence>